<keyword id="KW-0560">Oxidoreductase</keyword>
<gene>
    <name evidence="1" type="primary">msrA</name>
    <name type="ordered locus">MmarC5_1107</name>
</gene>
<feature type="chain" id="PRO_1000068340" description="Peptide methionine sulfoxide reductase MsrA">
    <location>
        <begin position="1"/>
        <end position="157"/>
    </location>
</feature>
<feature type="active site" evidence="1">
    <location>
        <position position="13"/>
    </location>
</feature>
<comment type="function">
    <text evidence="1">Has an important function as a repair enzyme for proteins that have been inactivated by oxidation. Catalyzes the reversible oxidation-reduction of methionine sulfoxide in proteins to methionine.</text>
</comment>
<comment type="catalytic activity">
    <reaction evidence="1">
        <text>L-methionyl-[protein] + [thioredoxin]-disulfide + H2O = L-methionyl-(S)-S-oxide-[protein] + [thioredoxin]-dithiol</text>
        <dbReference type="Rhea" id="RHEA:14217"/>
        <dbReference type="Rhea" id="RHEA-COMP:10698"/>
        <dbReference type="Rhea" id="RHEA-COMP:10700"/>
        <dbReference type="Rhea" id="RHEA-COMP:12313"/>
        <dbReference type="Rhea" id="RHEA-COMP:12315"/>
        <dbReference type="ChEBI" id="CHEBI:15377"/>
        <dbReference type="ChEBI" id="CHEBI:16044"/>
        <dbReference type="ChEBI" id="CHEBI:29950"/>
        <dbReference type="ChEBI" id="CHEBI:44120"/>
        <dbReference type="ChEBI" id="CHEBI:50058"/>
        <dbReference type="EC" id="1.8.4.11"/>
    </reaction>
</comment>
<comment type="catalytic activity">
    <reaction evidence="1">
        <text>[thioredoxin]-disulfide + L-methionine + H2O = L-methionine (S)-S-oxide + [thioredoxin]-dithiol</text>
        <dbReference type="Rhea" id="RHEA:19993"/>
        <dbReference type="Rhea" id="RHEA-COMP:10698"/>
        <dbReference type="Rhea" id="RHEA-COMP:10700"/>
        <dbReference type="ChEBI" id="CHEBI:15377"/>
        <dbReference type="ChEBI" id="CHEBI:29950"/>
        <dbReference type="ChEBI" id="CHEBI:50058"/>
        <dbReference type="ChEBI" id="CHEBI:57844"/>
        <dbReference type="ChEBI" id="CHEBI:58772"/>
        <dbReference type="EC" id="1.8.4.11"/>
    </reaction>
</comment>
<comment type="similarity">
    <text evidence="1">Belongs to the MsrA Met sulfoxide reductase family.</text>
</comment>
<organism>
    <name type="scientific">Methanococcus maripaludis (strain C5 / ATCC BAA-1333)</name>
    <dbReference type="NCBI Taxonomy" id="402880"/>
    <lineage>
        <taxon>Archaea</taxon>
        <taxon>Methanobacteriati</taxon>
        <taxon>Methanobacteriota</taxon>
        <taxon>Methanomada group</taxon>
        <taxon>Methanococci</taxon>
        <taxon>Methanococcales</taxon>
        <taxon>Methanococcaceae</taxon>
        <taxon>Methanococcus</taxon>
    </lineage>
</organism>
<protein>
    <recommendedName>
        <fullName evidence="1">Peptide methionine sulfoxide reductase MsrA</fullName>
        <shortName evidence="1">Protein-methionine-S-oxide reductase</shortName>
        <ecNumber evidence="1">1.8.4.11</ecNumber>
    </recommendedName>
    <alternativeName>
        <fullName evidence="1">Peptide-methionine (S)-S-oxide reductase</fullName>
        <shortName evidence="1">Peptide Met(O) reductase</shortName>
    </alternativeName>
</protein>
<dbReference type="EC" id="1.8.4.11" evidence="1"/>
<dbReference type="EMBL" id="CP000609">
    <property type="protein sequence ID" value="ABO35409.1"/>
    <property type="molecule type" value="Genomic_DNA"/>
</dbReference>
<dbReference type="RefSeq" id="WP_011868862.1">
    <property type="nucleotide sequence ID" value="NC_009135.1"/>
</dbReference>
<dbReference type="SMR" id="A4FYX5"/>
<dbReference type="STRING" id="402880.MmarC5_1107"/>
<dbReference type="GeneID" id="4927543"/>
<dbReference type="KEGG" id="mmq:MmarC5_1107"/>
<dbReference type="eggNOG" id="arCOG02816">
    <property type="taxonomic scope" value="Archaea"/>
</dbReference>
<dbReference type="HOGENOM" id="CLU_031040_10_2_2"/>
<dbReference type="OrthoDB" id="7150at2157"/>
<dbReference type="Proteomes" id="UP000000253">
    <property type="component" value="Chromosome"/>
</dbReference>
<dbReference type="GO" id="GO:0033744">
    <property type="term" value="F:L-methionine:thioredoxin-disulfide S-oxidoreductase activity"/>
    <property type="evidence" value="ECO:0007669"/>
    <property type="project" value="RHEA"/>
</dbReference>
<dbReference type="GO" id="GO:0008113">
    <property type="term" value="F:peptide-methionine (S)-S-oxide reductase activity"/>
    <property type="evidence" value="ECO:0007669"/>
    <property type="project" value="UniProtKB-UniRule"/>
</dbReference>
<dbReference type="GO" id="GO:0036211">
    <property type="term" value="P:protein modification process"/>
    <property type="evidence" value="ECO:0007669"/>
    <property type="project" value="UniProtKB-UniRule"/>
</dbReference>
<dbReference type="Gene3D" id="3.30.1060.10">
    <property type="entry name" value="Peptide methionine sulphoxide reductase MsrA"/>
    <property type="match status" value="1"/>
</dbReference>
<dbReference type="HAMAP" id="MF_01401">
    <property type="entry name" value="MsrA"/>
    <property type="match status" value="1"/>
</dbReference>
<dbReference type="InterPro" id="IPR002569">
    <property type="entry name" value="Met_Sox_Rdtase_MsrA_dom"/>
</dbReference>
<dbReference type="InterPro" id="IPR036509">
    <property type="entry name" value="Met_Sox_Rdtase_MsrA_sf"/>
</dbReference>
<dbReference type="NCBIfam" id="TIGR00401">
    <property type="entry name" value="msrA"/>
    <property type="match status" value="1"/>
</dbReference>
<dbReference type="PANTHER" id="PTHR43774">
    <property type="entry name" value="PEPTIDE METHIONINE SULFOXIDE REDUCTASE"/>
    <property type="match status" value="1"/>
</dbReference>
<dbReference type="PANTHER" id="PTHR43774:SF1">
    <property type="entry name" value="PEPTIDE METHIONINE SULFOXIDE REDUCTASE MSRA 2"/>
    <property type="match status" value="1"/>
</dbReference>
<dbReference type="Pfam" id="PF01625">
    <property type="entry name" value="PMSR"/>
    <property type="match status" value="1"/>
</dbReference>
<dbReference type="SUPFAM" id="SSF55068">
    <property type="entry name" value="Peptide methionine sulfoxide reductase"/>
    <property type="match status" value="1"/>
</dbReference>
<evidence type="ECO:0000255" key="1">
    <source>
        <dbReference type="HAMAP-Rule" id="MF_01401"/>
    </source>
</evidence>
<accession>A4FYX5</accession>
<name>MSRA_METM5</name>
<sequence>MTNTETAVFGMGCFWSAEELFRKIKGVISTEVGFMGGTVKNPTYGQVCRGKSGHIEVVNITYNPKIVKYTDLLNLFWNNHDPTTPNRQGWDVGEQYSSHIFYFTEEQRLLAEKSFEKIQKSSDLRIVTAIKKASDFFPAEEYHQKYFMKKNNSILNF</sequence>
<reference key="1">
    <citation type="submission" date="2007-03" db="EMBL/GenBank/DDBJ databases">
        <title>Complete sequence of chromosome of Methanococcus maripaludis C5.</title>
        <authorList>
            <consortium name="US DOE Joint Genome Institute"/>
            <person name="Copeland A."/>
            <person name="Lucas S."/>
            <person name="Lapidus A."/>
            <person name="Barry K."/>
            <person name="Glavina del Rio T."/>
            <person name="Dalin E."/>
            <person name="Tice H."/>
            <person name="Pitluck S."/>
            <person name="Chertkov O."/>
            <person name="Brettin T."/>
            <person name="Bruce D."/>
            <person name="Han C."/>
            <person name="Detter J.C."/>
            <person name="Schmutz J."/>
            <person name="Larimer F."/>
            <person name="Land M."/>
            <person name="Hauser L."/>
            <person name="Kyrpides N."/>
            <person name="Mikhailova N."/>
            <person name="Sieprawska-Lupa M."/>
            <person name="Whitman W.B."/>
            <person name="Richardson P."/>
        </authorList>
    </citation>
    <scope>NUCLEOTIDE SEQUENCE [LARGE SCALE GENOMIC DNA]</scope>
    <source>
        <strain>C5 / ATCC BAA-1333</strain>
    </source>
</reference>
<proteinExistence type="inferred from homology"/>